<organism>
    <name type="scientific">Pseudomonas entomophila (strain L48)</name>
    <dbReference type="NCBI Taxonomy" id="384676"/>
    <lineage>
        <taxon>Bacteria</taxon>
        <taxon>Pseudomonadati</taxon>
        <taxon>Pseudomonadota</taxon>
        <taxon>Gammaproteobacteria</taxon>
        <taxon>Pseudomonadales</taxon>
        <taxon>Pseudomonadaceae</taxon>
        <taxon>Pseudomonas</taxon>
    </lineage>
</organism>
<reference key="1">
    <citation type="journal article" date="2006" name="Nat. Biotechnol.">
        <title>Complete genome sequence of the entomopathogenic and metabolically versatile soil bacterium Pseudomonas entomophila.</title>
        <authorList>
            <person name="Vodovar N."/>
            <person name="Vallenet D."/>
            <person name="Cruveiller S."/>
            <person name="Rouy Z."/>
            <person name="Barbe V."/>
            <person name="Acosta C."/>
            <person name="Cattolico L."/>
            <person name="Jubin C."/>
            <person name="Lajus A."/>
            <person name="Segurens B."/>
            <person name="Vacherie B."/>
            <person name="Wincker P."/>
            <person name="Weissenbach J."/>
            <person name="Lemaitre B."/>
            <person name="Medigue C."/>
            <person name="Boccard F."/>
        </authorList>
    </citation>
    <scope>NUCLEOTIDE SEQUENCE [LARGE SCALE GENOMIC DNA]</scope>
    <source>
        <strain>L48</strain>
    </source>
</reference>
<evidence type="ECO:0000255" key="1">
    <source>
        <dbReference type="HAMAP-Rule" id="MF_00107"/>
    </source>
</evidence>
<keyword id="KW-0414">Isoprene biosynthesis</keyword>
<keyword id="KW-0456">Lyase</keyword>
<keyword id="KW-0479">Metal-binding</keyword>
<name>ISPF_PSEE4</name>
<comment type="function">
    <text evidence="1">Involved in the biosynthesis of isopentenyl diphosphate (IPP) and dimethylallyl diphosphate (DMAPP), two major building blocks of isoprenoid compounds. Catalyzes the conversion of 4-diphosphocytidyl-2-C-methyl-D-erythritol 2-phosphate (CDP-ME2P) to 2-C-methyl-D-erythritol 2,4-cyclodiphosphate (ME-CPP) with a corresponding release of cytidine 5-monophosphate (CMP).</text>
</comment>
<comment type="catalytic activity">
    <reaction evidence="1">
        <text>4-CDP-2-C-methyl-D-erythritol 2-phosphate = 2-C-methyl-D-erythritol 2,4-cyclic diphosphate + CMP</text>
        <dbReference type="Rhea" id="RHEA:23864"/>
        <dbReference type="ChEBI" id="CHEBI:57919"/>
        <dbReference type="ChEBI" id="CHEBI:58483"/>
        <dbReference type="ChEBI" id="CHEBI:60377"/>
        <dbReference type="EC" id="4.6.1.12"/>
    </reaction>
</comment>
<comment type="cofactor">
    <cofactor evidence="1">
        <name>a divalent metal cation</name>
        <dbReference type="ChEBI" id="CHEBI:60240"/>
    </cofactor>
    <text evidence="1">Binds 1 divalent metal cation per subunit.</text>
</comment>
<comment type="pathway">
    <text evidence="1">Isoprenoid biosynthesis; isopentenyl diphosphate biosynthesis via DXP pathway; isopentenyl diphosphate from 1-deoxy-D-xylulose 5-phosphate: step 4/6.</text>
</comment>
<comment type="subunit">
    <text evidence="1">Homotrimer.</text>
</comment>
<comment type="similarity">
    <text evidence="1">Belongs to the IspF family.</text>
</comment>
<gene>
    <name evidence="1" type="primary">ispF</name>
    <name type="ordered locus">PSEEN4194</name>
</gene>
<accession>Q1I652</accession>
<protein>
    <recommendedName>
        <fullName evidence="1">2-C-methyl-D-erythritol 2,4-cyclodiphosphate synthase</fullName>
        <shortName evidence="1">MECDP-synthase</shortName>
        <shortName evidence="1">MECPP-synthase</shortName>
        <shortName evidence="1">MECPS</shortName>
        <ecNumber evidence="1">4.6.1.12</ecNumber>
    </recommendedName>
</protein>
<feature type="chain" id="PRO_1000022862" description="2-C-methyl-D-erythritol 2,4-cyclodiphosphate synthase">
    <location>
        <begin position="1"/>
        <end position="157"/>
    </location>
</feature>
<feature type="binding site" evidence="1">
    <location>
        <begin position="8"/>
        <end position="10"/>
    </location>
    <ligand>
        <name>4-CDP-2-C-methyl-D-erythritol 2-phosphate</name>
        <dbReference type="ChEBI" id="CHEBI:57919"/>
    </ligand>
</feature>
<feature type="binding site" evidence="1">
    <location>
        <position position="8"/>
    </location>
    <ligand>
        <name>a divalent metal cation</name>
        <dbReference type="ChEBI" id="CHEBI:60240"/>
    </ligand>
</feature>
<feature type="binding site" evidence="1">
    <location>
        <position position="10"/>
    </location>
    <ligand>
        <name>a divalent metal cation</name>
        <dbReference type="ChEBI" id="CHEBI:60240"/>
    </ligand>
</feature>
<feature type="binding site" evidence="1">
    <location>
        <begin position="34"/>
        <end position="35"/>
    </location>
    <ligand>
        <name>4-CDP-2-C-methyl-D-erythritol 2-phosphate</name>
        <dbReference type="ChEBI" id="CHEBI:57919"/>
    </ligand>
</feature>
<feature type="binding site" evidence="1">
    <location>
        <position position="42"/>
    </location>
    <ligand>
        <name>a divalent metal cation</name>
        <dbReference type="ChEBI" id="CHEBI:60240"/>
    </ligand>
</feature>
<feature type="binding site" evidence="1">
    <location>
        <begin position="56"/>
        <end position="58"/>
    </location>
    <ligand>
        <name>4-CDP-2-C-methyl-D-erythritol 2-phosphate</name>
        <dbReference type="ChEBI" id="CHEBI:57919"/>
    </ligand>
</feature>
<feature type="binding site" evidence="1">
    <location>
        <begin position="61"/>
        <end position="65"/>
    </location>
    <ligand>
        <name>4-CDP-2-C-methyl-D-erythritol 2-phosphate</name>
        <dbReference type="ChEBI" id="CHEBI:57919"/>
    </ligand>
</feature>
<feature type="binding site" evidence="1">
    <location>
        <begin position="100"/>
        <end position="106"/>
    </location>
    <ligand>
        <name>4-CDP-2-C-methyl-D-erythritol 2-phosphate</name>
        <dbReference type="ChEBI" id="CHEBI:57919"/>
    </ligand>
</feature>
<feature type="binding site" evidence="1">
    <location>
        <begin position="132"/>
        <end position="135"/>
    </location>
    <ligand>
        <name>4-CDP-2-C-methyl-D-erythritol 2-phosphate</name>
        <dbReference type="ChEBI" id="CHEBI:57919"/>
    </ligand>
</feature>
<feature type="binding site" evidence="1">
    <location>
        <position position="139"/>
    </location>
    <ligand>
        <name>4-CDP-2-C-methyl-D-erythritol 2-phosphate</name>
        <dbReference type="ChEBI" id="CHEBI:57919"/>
    </ligand>
</feature>
<feature type="binding site" evidence="1">
    <location>
        <position position="142"/>
    </location>
    <ligand>
        <name>4-CDP-2-C-methyl-D-erythritol 2-phosphate</name>
        <dbReference type="ChEBI" id="CHEBI:57919"/>
    </ligand>
</feature>
<feature type="site" description="Transition state stabilizer" evidence="1">
    <location>
        <position position="34"/>
    </location>
</feature>
<feature type="site" description="Transition state stabilizer" evidence="1">
    <location>
        <position position="133"/>
    </location>
</feature>
<proteinExistence type="inferred from homology"/>
<dbReference type="EC" id="4.6.1.12" evidence="1"/>
<dbReference type="EMBL" id="CT573326">
    <property type="protein sequence ID" value="CAK16883.1"/>
    <property type="molecule type" value="Genomic_DNA"/>
</dbReference>
<dbReference type="RefSeq" id="WP_011535254.1">
    <property type="nucleotide sequence ID" value="NC_008027.1"/>
</dbReference>
<dbReference type="SMR" id="Q1I652"/>
<dbReference type="STRING" id="384676.PSEEN4194"/>
<dbReference type="GeneID" id="32807201"/>
<dbReference type="KEGG" id="pen:PSEEN4194"/>
<dbReference type="eggNOG" id="COG0245">
    <property type="taxonomic scope" value="Bacteria"/>
</dbReference>
<dbReference type="HOGENOM" id="CLU_084630_2_0_6"/>
<dbReference type="OrthoDB" id="9804336at2"/>
<dbReference type="UniPathway" id="UPA00056">
    <property type="reaction ID" value="UER00095"/>
</dbReference>
<dbReference type="Proteomes" id="UP000000658">
    <property type="component" value="Chromosome"/>
</dbReference>
<dbReference type="GO" id="GO:0008685">
    <property type="term" value="F:2-C-methyl-D-erythritol 2,4-cyclodiphosphate synthase activity"/>
    <property type="evidence" value="ECO:0007669"/>
    <property type="project" value="UniProtKB-UniRule"/>
</dbReference>
<dbReference type="GO" id="GO:0046872">
    <property type="term" value="F:metal ion binding"/>
    <property type="evidence" value="ECO:0007669"/>
    <property type="project" value="UniProtKB-KW"/>
</dbReference>
<dbReference type="GO" id="GO:0019288">
    <property type="term" value="P:isopentenyl diphosphate biosynthetic process, methylerythritol 4-phosphate pathway"/>
    <property type="evidence" value="ECO:0007669"/>
    <property type="project" value="UniProtKB-UniRule"/>
</dbReference>
<dbReference type="GO" id="GO:0016114">
    <property type="term" value="P:terpenoid biosynthetic process"/>
    <property type="evidence" value="ECO:0007669"/>
    <property type="project" value="InterPro"/>
</dbReference>
<dbReference type="CDD" id="cd00554">
    <property type="entry name" value="MECDP_synthase"/>
    <property type="match status" value="1"/>
</dbReference>
<dbReference type="FunFam" id="3.30.1330.50:FF:000001">
    <property type="entry name" value="2-C-methyl-D-erythritol 2,4-cyclodiphosphate synthase"/>
    <property type="match status" value="1"/>
</dbReference>
<dbReference type="Gene3D" id="3.30.1330.50">
    <property type="entry name" value="2-C-methyl-D-erythritol 2,4-cyclodiphosphate synthase"/>
    <property type="match status" value="1"/>
</dbReference>
<dbReference type="HAMAP" id="MF_00107">
    <property type="entry name" value="IspF"/>
    <property type="match status" value="1"/>
</dbReference>
<dbReference type="InterPro" id="IPR003526">
    <property type="entry name" value="MECDP_synthase"/>
</dbReference>
<dbReference type="InterPro" id="IPR020555">
    <property type="entry name" value="MECDP_synthase_CS"/>
</dbReference>
<dbReference type="InterPro" id="IPR036571">
    <property type="entry name" value="MECDP_synthase_sf"/>
</dbReference>
<dbReference type="NCBIfam" id="TIGR00151">
    <property type="entry name" value="ispF"/>
    <property type="match status" value="1"/>
</dbReference>
<dbReference type="PANTHER" id="PTHR43181">
    <property type="entry name" value="2-C-METHYL-D-ERYTHRITOL 2,4-CYCLODIPHOSPHATE SYNTHASE, CHLOROPLASTIC"/>
    <property type="match status" value="1"/>
</dbReference>
<dbReference type="PANTHER" id="PTHR43181:SF1">
    <property type="entry name" value="2-C-METHYL-D-ERYTHRITOL 2,4-CYCLODIPHOSPHATE SYNTHASE, CHLOROPLASTIC"/>
    <property type="match status" value="1"/>
</dbReference>
<dbReference type="Pfam" id="PF02542">
    <property type="entry name" value="YgbB"/>
    <property type="match status" value="1"/>
</dbReference>
<dbReference type="SUPFAM" id="SSF69765">
    <property type="entry name" value="IpsF-like"/>
    <property type="match status" value="1"/>
</dbReference>
<dbReference type="PROSITE" id="PS01350">
    <property type="entry name" value="ISPF"/>
    <property type="match status" value="1"/>
</dbReference>
<sequence length="157" mass="16843">MRIGHGYDVHRFCDGDFITLGGVRIPHKYGLLAHSDGDVLLHALSDALLGAAALGDIGKHFPDTDPQFKGADSRVLLRHVVGIVDNKGWKVGNVDATIVAQAPKMAPHIETMRQQIAADLQVELDQVNVKATTEEKLGFTGREEGIAVHAVALLLPA</sequence>